<comment type="function">
    <text evidence="1 5">Alpha-ketoglutarate-dependent dioxygenase; part of the gene cluster that mediates the biosynthesis of the antihypercholesterolemic agents phomoidrides which are dimeric anhydrides (PubMed:26558485). Within the pathway, phiK is responsible for the iterative oxidation necessary to convert prephomoidride to phomoidride A (Probable). The pathway begins with the highly reducing polyketide synthase phiA that catalyzes the formation of a C12-fatty acyl-ACP, starting from one acetate and 5 malonate units. The hydrolase phiM is involved in the release of the C12-fatty acyl chain from phiA. The alkylcitrate synthase (ACS) phiJ and the alkylcitrate dehydratase (ACDH) phiI then give rise to decarboxylated monomeric anhydrides by coupling the C12-fatty acyl chain with oxalacetic acid. The cyclase phiC is responsible for the dimerization of the monomeric anhydrides which leads to the production of prephomoidride that contains the characteristic bicyclo[4.3.1]deca-1,6-diene system of phomoidrides. Iterative oxidation catalyzed by the alpha-ketoglutarate-dependent dioxygenase phiK produced then phomoidride A. Finally, the methyltransferase phiE converts phomoidride A to phomoidride B via an acetalization reaction. The phosphatidylethanolamine-binding protein phiB and phiN are not essential for dimerization and their functions have still to be determined (Probable).</text>
</comment>
<comment type="catalytic activity">
    <reaction evidence="5">
        <text>2-[(1R,8S,14R,15R)-11-hydroxy-14,15-bis[(6E)-oct-6-en-1-yl]-3,5,9-trioxo-4,10-dioxatetracyclo[9.4.0.0(2,6).0(8,12)]pentadeca-2(6),12-dien-8-yl]acetate + 3 2-oxoglutarate + 3 O2 = phomoidride A + 3 succinate + 3 CO2 + H2O</text>
        <dbReference type="Rhea" id="RHEA:77655"/>
        <dbReference type="ChEBI" id="CHEBI:15377"/>
        <dbReference type="ChEBI" id="CHEBI:15379"/>
        <dbReference type="ChEBI" id="CHEBI:16526"/>
        <dbReference type="ChEBI" id="CHEBI:16810"/>
        <dbReference type="ChEBI" id="CHEBI:30031"/>
        <dbReference type="ChEBI" id="CHEBI:197433"/>
        <dbReference type="ChEBI" id="CHEBI:197434"/>
    </reaction>
    <physiologicalReaction direction="left-to-right" evidence="5">
        <dbReference type="Rhea" id="RHEA:77656"/>
    </physiologicalReaction>
</comment>
<comment type="pathway">
    <text evidence="5">Secondary metabolite biosynthesis.</text>
</comment>
<comment type="biotechnology">
    <text evidence="2">Phomoidrides A and B (also known as CP-225,917 and CP-263,114) are potent inhibitors of Ras farnesyltransferase and squalene synthase (PubMed:9066758). CP-225,917 and CP-263,114 inhibit Ras farnesyl transferase from rat brain with IC(50) values of 6 uM and 20 uoM, respectively (PubMed:9066758). CP-225,917 inhibits squalene synthase with an IC(50) value of 43 uM and CP-263,114 with an IC(50) of 160 uM (PubMed:9066758).</text>
</comment>
<comment type="similarity">
    <text evidence="4">Belongs to the asaB hydroxylase/desaturase family.</text>
</comment>
<sequence>MPHSVEAEQGVVEAFLEYYAPNSDGSLPDANDLEVQYGRKNLDLKSVKVGDMRSRDFKLEEDGFTLMKHESAMTDFTDREKVKKEYYPEVAEAIKKHTGASKVICFNHNVRSTALPGLDLQKQKVDHVGPMRRVHIDVAPGGVSEAVTKRAGEEFMSKFQGRWKIMNAWKPIRTVERDPLGVAVAASVPDEDLINLKRYRPDGSLSESRYAVKAGEGHQWYYVPQQRTDEMILFTQYSDNPNRGIADRVAHCAFILPGTEDKPVRESVEVRALVVF</sequence>
<dbReference type="EC" id="1.-.-.-" evidence="5"/>
<dbReference type="EMBL" id="LC086931">
    <property type="protein sequence ID" value="BBG28508.1"/>
    <property type="molecule type" value="Genomic_DNA"/>
</dbReference>
<dbReference type="SMR" id="A0A348HAY6"/>
<dbReference type="GO" id="GO:0016491">
    <property type="term" value="F:oxidoreductase activity"/>
    <property type="evidence" value="ECO:0007669"/>
    <property type="project" value="UniProtKB-KW"/>
</dbReference>
<dbReference type="InterPro" id="IPR044053">
    <property type="entry name" value="AsaB-like"/>
</dbReference>
<dbReference type="NCBIfam" id="NF041278">
    <property type="entry name" value="CmcJ_NvfI_EfuI"/>
    <property type="match status" value="1"/>
</dbReference>
<dbReference type="PANTHER" id="PTHR34598">
    <property type="entry name" value="BLL6449 PROTEIN"/>
    <property type="match status" value="1"/>
</dbReference>
<dbReference type="PANTHER" id="PTHR34598:SF3">
    <property type="entry name" value="OXIDOREDUCTASE AN1597"/>
    <property type="match status" value="1"/>
</dbReference>
<reference key="1">
    <citation type="journal article" date="2015" name="Org. Lett.">
        <title>Biosynthetic study on antihypercholesterolemic agent phomoidride: general biogenesis of fungal dimeric anhydrides.</title>
        <authorList>
            <person name="Fujii R."/>
            <person name="Matsu Y."/>
            <person name="Minami A."/>
            <person name="Nagamine S."/>
            <person name="Takeuchi I."/>
            <person name="Gomi K."/>
            <person name="Oikawa H."/>
        </authorList>
    </citation>
    <scope>NUCLEOTIDE SEQUENCE [GENOMIC DNA]</scope>
    <source>
        <strain>ATCC 74256</strain>
    </source>
</reference>
<reference key="2">
    <citation type="journal article" date="1997" name="J. Antibiot.">
        <title>CP-225,917 and CP-263,114, novel Ras farnesylation inhibitors from an unidentified fungus. I. Taxonomy, fermentation, isolation, and biochemical properties.</title>
        <authorList>
            <person name="Dabrah T.T."/>
            <person name="Harwood H.J. Jr."/>
            <person name="Huang L.H."/>
            <person name="Jankovich N.D."/>
            <person name="Kaneko T."/>
            <person name="Li J.C."/>
            <person name="Lindsey S."/>
            <person name="Moshier P.M."/>
            <person name="Subashi T.A."/>
            <person name="Therrien M."/>
            <person name="Watts P.C."/>
        </authorList>
    </citation>
    <scope>BIOTECHNOLOGY</scope>
</reference>
<reference key="3">
    <citation type="journal article" date="2022" name="J. Am. Chem. Soc.">
        <title>Elucidation of late-stage biosynthesis of phomoidride: proposal of cyclization mechanism affording characteristic nine-membered ring of fungal dimeric anhydride.</title>
        <authorList>
            <person name="Yamamoto S."/>
            <person name="Matsuyama T."/>
            <person name="Ozaki T."/>
            <person name="Takino J."/>
            <person name="Sato H."/>
            <person name="Uchiyama M."/>
            <person name="Minami A."/>
            <person name="Oikawa H."/>
        </authorList>
    </citation>
    <scope>FUNCTION</scope>
</reference>
<name>PHIK_FUNX7</name>
<evidence type="ECO:0000269" key="1">
    <source>
    </source>
</evidence>
<evidence type="ECO:0000269" key="2">
    <source>
    </source>
</evidence>
<evidence type="ECO:0000303" key="3">
    <source>
    </source>
</evidence>
<evidence type="ECO:0000305" key="4"/>
<evidence type="ECO:0000305" key="5">
    <source>
    </source>
</evidence>
<proteinExistence type="evidence at protein level"/>
<gene>
    <name evidence="3" type="primary">phiK</name>
</gene>
<accession>A0A348HAY6</accession>
<organism>
    <name type="scientific">Fungal sp. (strain ATCC 74256)</name>
    <dbReference type="NCBI Taxonomy" id="1729595"/>
    <lineage>
        <taxon>Eukaryota</taxon>
        <taxon>Fungi</taxon>
    </lineage>
</organism>
<protein>
    <recommendedName>
        <fullName evidence="3">Alpha-ketoglutarate-dependent dioxygenase phiK</fullName>
        <shortName evidence="3">Alpha-KGDO</shortName>
        <ecNumber evidence="5">1.-.-.-</ecNumber>
    </recommendedName>
    <alternativeName>
        <fullName evidence="3">Phomoidride biosynthesis cluster protein K</fullName>
    </alternativeName>
</protein>
<feature type="chain" id="PRO_0000458948" description="Alpha-ketoglutarate-dependent dioxygenase phiK">
    <location>
        <begin position="1"/>
        <end position="276"/>
    </location>
</feature>
<keyword id="KW-0560">Oxidoreductase</keyword>